<comment type="function">
    <text evidence="1">Substrate recognition component of a SCF (SKP1-CUL1-F-box protein) E3 ubiquitin-protein ligase complex which mediates the ubiquitination and subsequent proteasomal degradation of target proteins. Probably recognizes and binds to phosphorylated target proteins. Recognizes YBX1 (By similarity).</text>
</comment>
<comment type="pathway">
    <text>Protein modification; protein ubiquitination.</text>
</comment>
<comment type="subunit">
    <text evidence="1">Part of the SCF (SKP1-CUL1-F-box) E3 ubiquitin-protein ligase complex SCF(FBXO33) formed of CUL1, SKP1, RBX1 and FBXO33. Interacts via its N-terminus with YBX1 CSD domain. Directly interacts with SKP1 and CUL1 (By similarity).</text>
</comment>
<comment type="interaction">
    <interactant intactId="EBI-8555452">
        <id>Q7Z6M2</id>
    </interactant>
    <interactant intactId="EBI-359390">
        <id>Q13616</id>
        <label>CUL1</label>
    </interactant>
    <organismsDiffer>false</organismsDiffer>
    <experiments>2</experiments>
</comment>
<comment type="interaction">
    <interactant intactId="EBI-8555452">
        <id>Q7Z6M2</id>
    </interactant>
    <interactant intactId="EBI-307486">
        <id>P63208</id>
        <label>SKP1</label>
    </interactant>
    <organismsDiffer>false</organismsDiffer>
    <experiments>5</experiments>
</comment>
<comment type="interaction">
    <interactant intactId="EBI-8555452">
        <id>Q7Z6M2</id>
    </interactant>
    <interactant intactId="EBI-354065">
        <id>P67809</id>
        <label>YBX1</label>
    </interactant>
    <organismsDiffer>false</organismsDiffer>
    <experiments>6</experiments>
</comment>
<protein>
    <recommendedName>
        <fullName>F-box only protein 33</fullName>
    </recommendedName>
</protein>
<name>FBX33_HUMAN</name>
<reference key="1">
    <citation type="journal article" date="2004" name="Genome Res.">
        <title>The status, quality, and expansion of the NIH full-length cDNA project: the Mammalian Gene Collection (MGC).</title>
        <authorList>
            <consortium name="The MGC Project Team"/>
        </authorList>
    </citation>
    <scope>NUCLEOTIDE SEQUENCE [LARGE SCALE MRNA]</scope>
    <source>
        <tissue>Brain</tissue>
        <tissue>Skin</tissue>
        <tissue>Testis</tissue>
    </source>
</reference>
<reference key="2">
    <citation type="submission" date="2003-02" db="EMBL/GenBank/DDBJ databases">
        <title>Full-length cDNA libraries and normalization.</title>
        <authorList>
            <person name="Li W.B."/>
            <person name="Gruber C."/>
            <person name="Jessee J."/>
            <person name="Polayes D."/>
        </authorList>
    </citation>
    <scope>NUCLEOTIDE SEQUENCE [LARGE SCALE MRNA] OF 4-346</scope>
    <source>
        <tissue>Placenta</tissue>
    </source>
</reference>
<sequence>MLLFLSVPQPRPPGARTRAGAARVARWRRLRLQQLRRLRGLLRVLRGRPGAGSRRRGRMALCGQAAGAASLPSELIVHIFSFLPAPDRLRASASCSHWRECLFYPALWPQLRICLRVSPAEQPRLEFLMRKCGWFVRELRVEFAAENYLSGGGPGDGGGADTGTGGEEVEALQLSARWLEVLRTYLELVLCVLVSIRNNRNLQKFSLFGDISVLQQQGSLSNTYLSKVDPDGKKIKQIQQLFEEILSNSRQLKWLSCGFMLEIVTPTSLSSLSNAVANTMEHLSLLDNNIPGNSTLITAVELERFVNLHSLALDFCDFTAEMARVLTDSNHVPLQRLSLLVHNVSVMHKSLDNMPNDEHWKALSRKSTSFRVYIMAFDIKSEDMLKILKPSIPLERIHFDSYITCVSGAIVDLISRQYDKFLTHFILMNDVIDTSGFPDLSDNRNEDPLVLLAWRCTKLSLLAIHGYTVWAHNLIAIARLRGSDLKVLEVTEESIDFDQGELADQDVDPVHNLIEQVSLGLGQPWHAVMDIESLSVFTEPNRHFYREMQSFSEDI</sequence>
<proteinExistence type="evidence at protein level"/>
<dbReference type="EMBL" id="BC030611">
    <property type="status" value="NOT_ANNOTATED_CDS"/>
    <property type="molecule type" value="mRNA"/>
</dbReference>
<dbReference type="EMBL" id="BC042535">
    <property type="protein sequence ID" value="AAH42535.1"/>
    <property type="molecule type" value="mRNA"/>
</dbReference>
<dbReference type="EMBL" id="BC053537">
    <property type="protein sequence ID" value="AAH53537.1"/>
    <property type="molecule type" value="mRNA"/>
</dbReference>
<dbReference type="EMBL" id="BC068566">
    <property type="protein sequence ID" value="AAH68566.1"/>
    <property type="molecule type" value="mRNA"/>
</dbReference>
<dbReference type="EMBL" id="BX248772">
    <property type="protein sequence ID" value="CAD66579.1"/>
    <property type="molecule type" value="mRNA"/>
</dbReference>
<dbReference type="CCDS" id="CCDS9677.1"/>
<dbReference type="RefSeq" id="NP_976046.1">
    <property type="nucleotide sequence ID" value="NM_203301.4"/>
</dbReference>
<dbReference type="BioGRID" id="129019">
    <property type="interactions" value="20"/>
</dbReference>
<dbReference type="ComplexPortal" id="CPX-7973">
    <property type="entry name" value="SCF E3 ubiquitin ligase complex, FBXO33 variant"/>
</dbReference>
<dbReference type="FunCoup" id="Q7Z6M2">
    <property type="interactions" value="2636"/>
</dbReference>
<dbReference type="IntAct" id="Q7Z6M2">
    <property type="interactions" value="16"/>
</dbReference>
<dbReference type="MINT" id="Q7Z6M2"/>
<dbReference type="STRING" id="9606.ENSP00000298097"/>
<dbReference type="iPTMnet" id="Q7Z6M2"/>
<dbReference type="PhosphoSitePlus" id="Q7Z6M2"/>
<dbReference type="BioMuta" id="FBXO33"/>
<dbReference type="DMDM" id="51315939"/>
<dbReference type="jPOST" id="Q7Z6M2"/>
<dbReference type="MassIVE" id="Q7Z6M2"/>
<dbReference type="PaxDb" id="9606-ENSP00000298097"/>
<dbReference type="PeptideAtlas" id="Q7Z6M2"/>
<dbReference type="ProteomicsDB" id="69446"/>
<dbReference type="Pumba" id="Q7Z6M2"/>
<dbReference type="Antibodypedia" id="23412">
    <property type="antibodies" value="75 antibodies from 17 providers"/>
</dbReference>
<dbReference type="DNASU" id="254170"/>
<dbReference type="Ensembl" id="ENST00000298097.8">
    <property type="protein sequence ID" value="ENSP00000298097.7"/>
    <property type="gene ID" value="ENSG00000165355.8"/>
</dbReference>
<dbReference type="GeneID" id="254170"/>
<dbReference type="KEGG" id="hsa:254170"/>
<dbReference type="MANE-Select" id="ENST00000298097.8">
    <property type="protein sequence ID" value="ENSP00000298097.7"/>
    <property type="RefSeq nucleotide sequence ID" value="NM_203301.4"/>
    <property type="RefSeq protein sequence ID" value="NP_976046.1"/>
</dbReference>
<dbReference type="UCSC" id="uc001wvk.4">
    <property type="organism name" value="human"/>
</dbReference>
<dbReference type="AGR" id="HGNC:19833"/>
<dbReference type="CTD" id="254170"/>
<dbReference type="DisGeNET" id="254170"/>
<dbReference type="GeneCards" id="FBXO33"/>
<dbReference type="HGNC" id="HGNC:19833">
    <property type="gene designation" value="FBXO33"/>
</dbReference>
<dbReference type="HPA" id="ENSG00000165355">
    <property type="expression patterns" value="Tissue enhanced (bone)"/>
</dbReference>
<dbReference type="MIM" id="609103">
    <property type="type" value="gene"/>
</dbReference>
<dbReference type="neXtProt" id="NX_Q7Z6M2"/>
<dbReference type="OpenTargets" id="ENSG00000165355"/>
<dbReference type="PharmGKB" id="PA134861757"/>
<dbReference type="VEuPathDB" id="HostDB:ENSG00000165355"/>
<dbReference type="eggNOG" id="ENOG502QPU4">
    <property type="taxonomic scope" value="Eukaryota"/>
</dbReference>
<dbReference type="GeneTree" id="ENSGT00390000017718"/>
<dbReference type="HOGENOM" id="CLU_042932_0_0_1"/>
<dbReference type="InParanoid" id="Q7Z6M2"/>
<dbReference type="OMA" id="NSRQMKW"/>
<dbReference type="OrthoDB" id="8757000at2759"/>
<dbReference type="PAN-GO" id="Q7Z6M2">
    <property type="GO annotations" value="1 GO annotation based on evolutionary models"/>
</dbReference>
<dbReference type="PhylomeDB" id="Q7Z6M2"/>
<dbReference type="TreeFam" id="TF321665"/>
<dbReference type="PathwayCommons" id="Q7Z6M2"/>
<dbReference type="SignaLink" id="Q7Z6M2"/>
<dbReference type="SIGNOR" id="Q7Z6M2"/>
<dbReference type="UniPathway" id="UPA00143"/>
<dbReference type="BioGRID-ORCS" id="254170">
    <property type="hits" value="12 hits in 1202 CRISPR screens"/>
</dbReference>
<dbReference type="ChiTaRS" id="FBXO33">
    <property type="organism name" value="human"/>
</dbReference>
<dbReference type="GenomeRNAi" id="254170"/>
<dbReference type="Pharos" id="Q7Z6M2">
    <property type="development level" value="Tdark"/>
</dbReference>
<dbReference type="PRO" id="PR:Q7Z6M2"/>
<dbReference type="Proteomes" id="UP000005640">
    <property type="component" value="Chromosome 14"/>
</dbReference>
<dbReference type="RNAct" id="Q7Z6M2">
    <property type="molecule type" value="protein"/>
</dbReference>
<dbReference type="Bgee" id="ENSG00000165355">
    <property type="expression patterns" value="Expressed in secondary oocyte and 188 other cell types or tissues"/>
</dbReference>
<dbReference type="ExpressionAtlas" id="Q7Z6M2">
    <property type="expression patterns" value="baseline and differential"/>
</dbReference>
<dbReference type="GO" id="GO:0031398">
    <property type="term" value="P:positive regulation of protein ubiquitination"/>
    <property type="evidence" value="ECO:0000318"/>
    <property type="project" value="GO_Central"/>
</dbReference>
<dbReference type="GO" id="GO:0016567">
    <property type="term" value="P:protein ubiquitination"/>
    <property type="evidence" value="ECO:0007669"/>
    <property type="project" value="UniProtKB-UniPathway"/>
</dbReference>
<dbReference type="CDD" id="cd22104">
    <property type="entry name" value="F-box_FBXO33"/>
    <property type="match status" value="1"/>
</dbReference>
<dbReference type="Gene3D" id="1.20.1280.50">
    <property type="match status" value="1"/>
</dbReference>
<dbReference type="Gene3D" id="3.80.10.10">
    <property type="entry name" value="Ribonuclease Inhibitor"/>
    <property type="match status" value="1"/>
</dbReference>
<dbReference type="InterPro" id="IPR036047">
    <property type="entry name" value="F-box-like_dom_sf"/>
</dbReference>
<dbReference type="InterPro" id="IPR001810">
    <property type="entry name" value="F-box_dom"/>
</dbReference>
<dbReference type="InterPro" id="IPR032675">
    <property type="entry name" value="LRR_dom_sf"/>
</dbReference>
<dbReference type="PANTHER" id="PTHR20933">
    <property type="entry name" value="F-BOX ONLY PROTEIN 33"/>
    <property type="match status" value="1"/>
</dbReference>
<dbReference type="PANTHER" id="PTHR20933:SF3">
    <property type="entry name" value="F-BOX ONLY PROTEIN 33"/>
    <property type="match status" value="1"/>
</dbReference>
<dbReference type="Pfam" id="PF12937">
    <property type="entry name" value="F-box-like"/>
    <property type="match status" value="1"/>
</dbReference>
<dbReference type="SMART" id="SM00256">
    <property type="entry name" value="FBOX"/>
    <property type="match status" value="1"/>
</dbReference>
<dbReference type="SUPFAM" id="SSF81383">
    <property type="entry name" value="F-box domain"/>
    <property type="match status" value="1"/>
</dbReference>
<dbReference type="PROSITE" id="PS50181">
    <property type="entry name" value="FBOX"/>
    <property type="match status" value="1"/>
</dbReference>
<evidence type="ECO:0000250" key="1"/>
<evidence type="ECO:0000255" key="2">
    <source>
        <dbReference type="PROSITE-ProRule" id="PRU00080"/>
    </source>
</evidence>
<accession>Q7Z6M2</accession>
<accession>Q6PIR2</accession>
<accession>Q86TR2</accession>
<accession>Q86YE0</accession>
<gene>
    <name type="primary">FBXO33</name>
    <name type="synonym">FBX33</name>
</gene>
<organism>
    <name type="scientific">Homo sapiens</name>
    <name type="common">Human</name>
    <dbReference type="NCBI Taxonomy" id="9606"/>
    <lineage>
        <taxon>Eukaryota</taxon>
        <taxon>Metazoa</taxon>
        <taxon>Chordata</taxon>
        <taxon>Craniata</taxon>
        <taxon>Vertebrata</taxon>
        <taxon>Euteleostomi</taxon>
        <taxon>Mammalia</taxon>
        <taxon>Eutheria</taxon>
        <taxon>Euarchontoglires</taxon>
        <taxon>Primates</taxon>
        <taxon>Haplorrhini</taxon>
        <taxon>Catarrhini</taxon>
        <taxon>Hominidae</taxon>
        <taxon>Homo</taxon>
    </lineage>
</organism>
<keyword id="KW-1267">Proteomics identification</keyword>
<keyword id="KW-1185">Reference proteome</keyword>
<keyword id="KW-0833">Ubl conjugation pathway</keyword>
<feature type="chain" id="PRO_0000119925" description="F-box only protein 33">
    <location>
        <begin position="1"/>
        <end position="555"/>
    </location>
</feature>
<feature type="domain" description="F-box" evidence="2">
    <location>
        <begin position="65"/>
        <end position="111"/>
    </location>
</feature>